<dbReference type="EC" id="4.2.1.113" evidence="1"/>
<dbReference type="EMBL" id="AM408590">
    <property type="protein sequence ID" value="CAL70583.1"/>
    <property type="molecule type" value="Genomic_DNA"/>
</dbReference>
<dbReference type="RefSeq" id="WP_003402923.1">
    <property type="nucleotide sequence ID" value="NC_008769.1"/>
</dbReference>
<dbReference type="SMR" id="A1KG30"/>
<dbReference type="KEGG" id="mbb:BCG_0598"/>
<dbReference type="HOGENOM" id="CLU_057696_0_0_11"/>
<dbReference type="UniPathway" id="UPA00079"/>
<dbReference type="UniPathway" id="UPA01057">
    <property type="reaction ID" value="UER00165"/>
</dbReference>
<dbReference type="Proteomes" id="UP000001472">
    <property type="component" value="Chromosome"/>
</dbReference>
<dbReference type="GO" id="GO:0000287">
    <property type="term" value="F:magnesium ion binding"/>
    <property type="evidence" value="ECO:0007669"/>
    <property type="project" value="UniProtKB-UniRule"/>
</dbReference>
<dbReference type="GO" id="GO:0043748">
    <property type="term" value="F:O-succinylbenzoate synthase activity"/>
    <property type="evidence" value="ECO:0007669"/>
    <property type="project" value="UniProtKB-EC"/>
</dbReference>
<dbReference type="GO" id="GO:0009234">
    <property type="term" value="P:menaquinone biosynthetic process"/>
    <property type="evidence" value="ECO:0007669"/>
    <property type="project" value="UniProtKB-UniRule"/>
</dbReference>
<dbReference type="CDD" id="cd03320">
    <property type="entry name" value="OSBS"/>
    <property type="match status" value="1"/>
</dbReference>
<dbReference type="Gene3D" id="3.20.20.120">
    <property type="entry name" value="Enolase-like C-terminal domain"/>
    <property type="match status" value="1"/>
</dbReference>
<dbReference type="HAMAP" id="MF_00470">
    <property type="entry name" value="MenC_1"/>
    <property type="match status" value="1"/>
</dbReference>
<dbReference type="InterPro" id="IPR036849">
    <property type="entry name" value="Enolase-like_C_sf"/>
</dbReference>
<dbReference type="InterPro" id="IPR029065">
    <property type="entry name" value="Enolase_C-like"/>
</dbReference>
<dbReference type="InterPro" id="IPR013342">
    <property type="entry name" value="Mandelate_racemase_C"/>
</dbReference>
<dbReference type="InterPro" id="IPR010196">
    <property type="entry name" value="OSB_synthase_MenC1"/>
</dbReference>
<dbReference type="NCBIfam" id="NF002782">
    <property type="entry name" value="PRK02901.1"/>
    <property type="match status" value="1"/>
</dbReference>
<dbReference type="PANTHER" id="PTHR48073:SF2">
    <property type="entry name" value="O-SUCCINYLBENZOATE SYNTHASE"/>
    <property type="match status" value="1"/>
</dbReference>
<dbReference type="PANTHER" id="PTHR48073">
    <property type="entry name" value="O-SUCCINYLBENZOATE SYNTHASE-RELATED"/>
    <property type="match status" value="1"/>
</dbReference>
<dbReference type="Pfam" id="PF18374">
    <property type="entry name" value="Enolase_like_N"/>
    <property type="match status" value="1"/>
</dbReference>
<dbReference type="Pfam" id="PF13378">
    <property type="entry name" value="MR_MLE_C"/>
    <property type="match status" value="1"/>
</dbReference>
<dbReference type="SFLD" id="SFLDG00180">
    <property type="entry name" value="muconate_cycloisomerase"/>
    <property type="match status" value="1"/>
</dbReference>
<dbReference type="SFLD" id="SFLDF00009">
    <property type="entry name" value="o-succinylbenzoate_synthase"/>
    <property type="match status" value="1"/>
</dbReference>
<dbReference type="SMART" id="SM00922">
    <property type="entry name" value="MR_MLE"/>
    <property type="match status" value="1"/>
</dbReference>
<dbReference type="SUPFAM" id="SSF51604">
    <property type="entry name" value="Enolase C-terminal domain-like"/>
    <property type="match status" value="1"/>
</dbReference>
<comment type="function">
    <text evidence="1">Converts 2-succinyl-6-hydroxy-2,4-cyclohexadiene-1-carboxylate (SHCHC) to 2-succinylbenzoate (OSB).</text>
</comment>
<comment type="catalytic activity">
    <reaction evidence="1">
        <text>(1R,6R)-6-hydroxy-2-succinyl-cyclohexa-2,4-diene-1-carboxylate = 2-succinylbenzoate + H2O</text>
        <dbReference type="Rhea" id="RHEA:10196"/>
        <dbReference type="ChEBI" id="CHEBI:15377"/>
        <dbReference type="ChEBI" id="CHEBI:18325"/>
        <dbReference type="ChEBI" id="CHEBI:58689"/>
        <dbReference type="EC" id="4.2.1.113"/>
    </reaction>
</comment>
<comment type="cofactor">
    <cofactor evidence="1">
        <name>a divalent metal cation</name>
        <dbReference type="ChEBI" id="CHEBI:60240"/>
    </cofactor>
</comment>
<comment type="pathway">
    <text evidence="1">Quinol/quinone metabolism; 1,4-dihydroxy-2-naphthoate biosynthesis; 1,4-dihydroxy-2-naphthoate from chorismate: step 4/7.</text>
</comment>
<comment type="pathway">
    <text evidence="1">Quinol/quinone metabolism; menaquinone biosynthesis.</text>
</comment>
<comment type="similarity">
    <text evidence="1">Belongs to the mandelate racemase/muconate lactonizing enzyme family. MenC type 1 subfamily.</text>
</comment>
<proteinExistence type="inferred from homology"/>
<keyword id="KW-0456">Lyase</keyword>
<keyword id="KW-0460">Magnesium</keyword>
<keyword id="KW-0474">Menaquinone biosynthesis</keyword>
<keyword id="KW-0479">Metal-binding</keyword>
<organism>
    <name type="scientific">Mycobacterium bovis (strain BCG / Pasteur 1173P2)</name>
    <dbReference type="NCBI Taxonomy" id="410289"/>
    <lineage>
        <taxon>Bacteria</taxon>
        <taxon>Bacillati</taxon>
        <taxon>Actinomycetota</taxon>
        <taxon>Actinomycetes</taxon>
        <taxon>Mycobacteriales</taxon>
        <taxon>Mycobacteriaceae</taxon>
        <taxon>Mycobacterium</taxon>
        <taxon>Mycobacterium tuberculosis complex</taxon>
    </lineage>
</organism>
<accession>A1KG30</accession>
<sequence>MIPVLPPLEALLDRLYVVALPMRVRFRGITTREVALIEGPAGWGEFGAFVEYQSAQACAWLASAIETAYCAPPPVRRDRVPINATVPAVAAAQVGEVLARFPGARTAKVKVAEPGQSLADDIERVNAVRELVPMVRVDANGGWGVAEAVAAAAALTADGPLEYLEQPCATVAELAELRRRVDVPIAADESIRKAEDPLAVVRAQAADIAVLKVAPLGGISALLDIAARIAVPVVVSSALDSAVGIAAGLTAAAALPELDHACGLGTGGLFEEDVAEPAAPVDGFLAVARTTPDPARLQALGAPPQRRQWWIDRVKACYSLLVPSFG</sequence>
<protein>
    <recommendedName>
        <fullName evidence="1">o-succinylbenzoate synthase</fullName>
        <shortName evidence="1">OSB synthase</shortName>
        <shortName evidence="1">OSBS</shortName>
        <ecNumber evidence="1">4.2.1.113</ecNumber>
    </recommendedName>
    <alternativeName>
        <fullName evidence="1">4-(2'-carboxyphenyl)-4-oxybutyric acid synthase</fullName>
    </alternativeName>
    <alternativeName>
        <fullName evidence="1">o-succinylbenzoic acid synthase</fullName>
    </alternativeName>
</protein>
<gene>
    <name evidence="1" type="primary">menC</name>
    <name type="ordered locus">BCG_0598</name>
</gene>
<reference key="1">
    <citation type="journal article" date="2007" name="Proc. Natl. Acad. Sci. U.S.A.">
        <title>Genome plasticity of BCG and impact on vaccine efficacy.</title>
        <authorList>
            <person name="Brosch R."/>
            <person name="Gordon S.V."/>
            <person name="Garnier T."/>
            <person name="Eiglmeier K."/>
            <person name="Frigui W."/>
            <person name="Valenti P."/>
            <person name="Dos Santos S."/>
            <person name="Duthoy S."/>
            <person name="Lacroix C."/>
            <person name="Garcia-Pelayo C."/>
            <person name="Inwald J.K."/>
            <person name="Golby P."/>
            <person name="Garcia J.N."/>
            <person name="Hewinson R.G."/>
            <person name="Behr M.A."/>
            <person name="Quail M.A."/>
            <person name="Churcher C."/>
            <person name="Barrell B.G."/>
            <person name="Parkhill J."/>
            <person name="Cole S.T."/>
        </authorList>
    </citation>
    <scope>NUCLEOTIDE SEQUENCE [LARGE SCALE GENOMIC DNA]</scope>
    <source>
        <strain>BCG / Pasteur 1173P2</strain>
    </source>
</reference>
<name>MENC_MYCBP</name>
<feature type="chain" id="PRO_1000013804" description="o-succinylbenzoate synthase">
    <location>
        <begin position="1"/>
        <end position="326"/>
    </location>
</feature>
<feature type="active site" description="Proton donor" evidence="1">
    <location>
        <position position="110"/>
    </location>
</feature>
<feature type="active site" description="Proton acceptor" evidence="1">
    <location>
        <position position="212"/>
    </location>
</feature>
<feature type="binding site" evidence="1">
    <location>
        <position position="138"/>
    </location>
    <ligand>
        <name>Mg(2+)</name>
        <dbReference type="ChEBI" id="CHEBI:18420"/>
    </ligand>
</feature>
<feature type="binding site" evidence="1">
    <location>
        <position position="165"/>
    </location>
    <ligand>
        <name>Mg(2+)</name>
        <dbReference type="ChEBI" id="CHEBI:18420"/>
    </ligand>
</feature>
<feature type="binding site" evidence="1">
    <location>
        <position position="188"/>
    </location>
    <ligand>
        <name>Mg(2+)</name>
        <dbReference type="ChEBI" id="CHEBI:18420"/>
    </ligand>
</feature>
<evidence type="ECO:0000255" key="1">
    <source>
        <dbReference type="HAMAP-Rule" id="MF_00470"/>
    </source>
</evidence>